<gene>
    <name type="primary">fcf1</name>
    <name type="ORF">SPBC32H8.04c</name>
</gene>
<reference key="1">
    <citation type="journal article" date="2000" name="Yeast">
        <title>A 38 kb segment containing the cdc2 gene from the left arm of fission yeast chromosome II: sequence analysis and characterization of the genomic DNA and cDNAs encoded on the segment.</title>
        <authorList>
            <person name="Machida M."/>
            <person name="Yamazaki S."/>
            <person name="Kunihiro S."/>
            <person name="Tanaka T."/>
            <person name="Kushida N."/>
            <person name="Jinno K."/>
            <person name="Haikawa Y."/>
            <person name="Yamazaki J."/>
            <person name="Yamamoto S."/>
            <person name="Sekine M."/>
            <person name="Oguchi A."/>
            <person name="Nagai Y."/>
            <person name="Sakai M."/>
            <person name="Aoki K."/>
            <person name="Ogura K."/>
            <person name="Kudoh Y."/>
            <person name="Kikuchi H."/>
            <person name="Zhang M.Q."/>
            <person name="Yanagida M."/>
        </authorList>
    </citation>
    <scope>NUCLEOTIDE SEQUENCE [LARGE SCALE GENOMIC DNA]</scope>
    <source>
        <strain>972 / ATCC 24843</strain>
    </source>
</reference>
<reference key="2">
    <citation type="journal article" date="2002" name="Nature">
        <title>The genome sequence of Schizosaccharomyces pombe.</title>
        <authorList>
            <person name="Wood V."/>
            <person name="Gwilliam R."/>
            <person name="Rajandream M.A."/>
            <person name="Lyne M.H."/>
            <person name="Lyne R."/>
            <person name="Stewart A."/>
            <person name="Sgouros J.G."/>
            <person name="Peat N."/>
            <person name="Hayles J."/>
            <person name="Baker S.G."/>
            <person name="Basham D."/>
            <person name="Bowman S."/>
            <person name="Brooks K."/>
            <person name="Brown D."/>
            <person name="Brown S."/>
            <person name="Chillingworth T."/>
            <person name="Churcher C.M."/>
            <person name="Collins M."/>
            <person name="Connor R."/>
            <person name="Cronin A."/>
            <person name="Davis P."/>
            <person name="Feltwell T."/>
            <person name="Fraser A."/>
            <person name="Gentles S."/>
            <person name="Goble A."/>
            <person name="Hamlin N."/>
            <person name="Harris D.E."/>
            <person name="Hidalgo J."/>
            <person name="Hodgson G."/>
            <person name="Holroyd S."/>
            <person name="Hornsby T."/>
            <person name="Howarth S."/>
            <person name="Huckle E.J."/>
            <person name="Hunt S."/>
            <person name="Jagels K."/>
            <person name="James K.D."/>
            <person name="Jones L."/>
            <person name="Jones M."/>
            <person name="Leather S."/>
            <person name="McDonald S."/>
            <person name="McLean J."/>
            <person name="Mooney P."/>
            <person name="Moule S."/>
            <person name="Mungall K.L."/>
            <person name="Murphy L.D."/>
            <person name="Niblett D."/>
            <person name="Odell C."/>
            <person name="Oliver K."/>
            <person name="O'Neil S."/>
            <person name="Pearson D."/>
            <person name="Quail M.A."/>
            <person name="Rabbinowitsch E."/>
            <person name="Rutherford K.M."/>
            <person name="Rutter S."/>
            <person name="Saunders D."/>
            <person name="Seeger K."/>
            <person name="Sharp S."/>
            <person name="Skelton J."/>
            <person name="Simmonds M.N."/>
            <person name="Squares R."/>
            <person name="Squares S."/>
            <person name="Stevens K."/>
            <person name="Taylor K."/>
            <person name="Taylor R.G."/>
            <person name="Tivey A."/>
            <person name="Walsh S.V."/>
            <person name="Warren T."/>
            <person name="Whitehead S."/>
            <person name="Woodward J.R."/>
            <person name="Volckaert G."/>
            <person name="Aert R."/>
            <person name="Robben J."/>
            <person name="Grymonprez B."/>
            <person name="Weltjens I."/>
            <person name="Vanstreels E."/>
            <person name="Rieger M."/>
            <person name="Schaefer M."/>
            <person name="Mueller-Auer S."/>
            <person name="Gabel C."/>
            <person name="Fuchs M."/>
            <person name="Duesterhoeft A."/>
            <person name="Fritzc C."/>
            <person name="Holzer E."/>
            <person name="Moestl D."/>
            <person name="Hilbert H."/>
            <person name="Borzym K."/>
            <person name="Langer I."/>
            <person name="Beck A."/>
            <person name="Lehrach H."/>
            <person name="Reinhardt R."/>
            <person name="Pohl T.M."/>
            <person name="Eger P."/>
            <person name="Zimmermann W."/>
            <person name="Wedler H."/>
            <person name="Wambutt R."/>
            <person name="Purnelle B."/>
            <person name="Goffeau A."/>
            <person name="Cadieu E."/>
            <person name="Dreano S."/>
            <person name="Gloux S."/>
            <person name="Lelaure V."/>
            <person name="Mottier S."/>
            <person name="Galibert F."/>
            <person name="Aves S.J."/>
            <person name="Xiang Z."/>
            <person name="Hunt C."/>
            <person name="Moore K."/>
            <person name="Hurst S.M."/>
            <person name="Lucas M."/>
            <person name="Rochet M."/>
            <person name="Gaillardin C."/>
            <person name="Tallada V.A."/>
            <person name="Garzon A."/>
            <person name="Thode G."/>
            <person name="Daga R.R."/>
            <person name="Cruzado L."/>
            <person name="Jimenez J."/>
            <person name="Sanchez M."/>
            <person name="del Rey F."/>
            <person name="Benito J."/>
            <person name="Dominguez A."/>
            <person name="Revuelta J.L."/>
            <person name="Moreno S."/>
            <person name="Armstrong J."/>
            <person name="Forsburg S.L."/>
            <person name="Cerutti L."/>
            <person name="Lowe T."/>
            <person name="McCombie W.R."/>
            <person name="Paulsen I."/>
            <person name="Potashkin J."/>
            <person name="Shpakovski G.V."/>
            <person name="Ussery D."/>
            <person name="Barrell B.G."/>
            <person name="Nurse P."/>
        </authorList>
    </citation>
    <scope>NUCLEOTIDE SEQUENCE [LARGE SCALE GENOMIC DNA]</scope>
    <source>
        <strain>972 / ATCC 24843</strain>
    </source>
</reference>
<reference key="3">
    <citation type="journal article" date="2006" name="Nat. Biotechnol.">
        <title>ORFeome cloning and global analysis of protein localization in the fission yeast Schizosaccharomyces pombe.</title>
        <authorList>
            <person name="Matsuyama A."/>
            <person name="Arai R."/>
            <person name="Yashiroda Y."/>
            <person name="Shirai A."/>
            <person name="Kamata A."/>
            <person name="Sekido S."/>
            <person name="Kobayashi Y."/>
            <person name="Hashimoto A."/>
            <person name="Hamamoto M."/>
            <person name="Hiraoka Y."/>
            <person name="Horinouchi S."/>
            <person name="Yoshida M."/>
        </authorList>
    </citation>
    <scope>SUBCELLULAR LOCATION [LARGE SCALE ANALYSIS]</scope>
</reference>
<proteinExistence type="evidence at protein level"/>
<protein>
    <recommendedName>
        <fullName>rRNA-processing protein fcf1</fullName>
    </recommendedName>
</protein>
<dbReference type="EMBL" id="AB004535">
    <property type="protein sequence ID" value="BAA21398.1"/>
    <property type="molecule type" value="Genomic_DNA"/>
</dbReference>
<dbReference type="EMBL" id="CU329671">
    <property type="protein sequence ID" value="CAC37494.1"/>
    <property type="molecule type" value="Genomic_DNA"/>
</dbReference>
<dbReference type="RefSeq" id="NP_595610.1">
    <property type="nucleotide sequence ID" value="NM_001021505.2"/>
</dbReference>
<dbReference type="PDB" id="5YZ4">
    <property type="method" value="X-ray"/>
    <property type="resolution" value="2.13 A"/>
    <property type="chains" value="A=60-192"/>
</dbReference>
<dbReference type="PDBsum" id="5YZ4"/>
<dbReference type="SMR" id="O13610"/>
<dbReference type="BioGRID" id="276751">
    <property type="interactions" value="2"/>
</dbReference>
<dbReference type="FunCoup" id="O13610">
    <property type="interactions" value="856"/>
</dbReference>
<dbReference type="STRING" id="284812.O13610"/>
<dbReference type="PaxDb" id="4896-SPBC32H8.04c.1"/>
<dbReference type="EnsemblFungi" id="SPBC32H8.04c.1">
    <property type="protein sequence ID" value="SPBC32H8.04c.1:pep"/>
    <property type="gene ID" value="SPBC32H8.04c"/>
</dbReference>
<dbReference type="PomBase" id="SPBC32H8.04c">
    <property type="gene designation" value="fcf1"/>
</dbReference>
<dbReference type="VEuPathDB" id="FungiDB:SPBC32H8.04c"/>
<dbReference type="eggNOG" id="KOG3165">
    <property type="taxonomic scope" value="Eukaryota"/>
</dbReference>
<dbReference type="HOGENOM" id="CLU_081098_0_1_1"/>
<dbReference type="InParanoid" id="O13610"/>
<dbReference type="OMA" id="GMMDCLL"/>
<dbReference type="PhylomeDB" id="O13610"/>
<dbReference type="Reactome" id="R-SPO-6791226">
    <property type="pathway name" value="Major pathway of rRNA processing in the nucleolus and cytosol"/>
</dbReference>
<dbReference type="PRO" id="PR:O13610"/>
<dbReference type="Proteomes" id="UP000002485">
    <property type="component" value="Chromosome II"/>
</dbReference>
<dbReference type="GO" id="GO:0005730">
    <property type="term" value="C:nucleolus"/>
    <property type="evidence" value="ECO:0007005"/>
    <property type="project" value="PomBase"/>
</dbReference>
<dbReference type="GO" id="GO:0005634">
    <property type="term" value="C:nucleus"/>
    <property type="evidence" value="ECO:0007005"/>
    <property type="project" value="PomBase"/>
</dbReference>
<dbReference type="GO" id="GO:0032040">
    <property type="term" value="C:small-subunit processome"/>
    <property type="evidence" value="ECO:0000318"/>
    <property type="project" value="GO_Central"/>
</dbReference>
<dbReference type="GO" id="GO:0004521">
    <property type="term" value="F:RNA endonuclease activity"/>
    <property type="evidence" value="ECO:0000315"/>
    <property type="project" value="PomBase"/>
</dbReference>
<dbReference type="GO" id="GO:0000447">
    <property type="term" value="P:endonucleolytic cleavage in ITS1 to separate SSU-rRNA from 5.8S rRNA and LSU-rRNA from tricistronic rRNA transcript (SSU-rRNA, 5.8S rRNA, LSU-rRNA)"/>
    <property type="evidence" value="ECO:0000315"/>
    <property type="project" value="PomBase"/>
</dbReference>
<dbReference type="GO" id="GO:0000472">
    <property type="term" value="P:endonucleolytic cleavage to generate mature 5'-end of SSU-rRNA from (SSU-rRNA, 5.8S rRNA, LSU-rRNA)"/>
    <property type="evidence" value="ECO:0000315"/>
    <property type="project" value="PomBase"/>
</dbReference>
<dbReference type="CDD" id="cd09864">
    <property type="entry name" value="PIN_Fcf1-like"/>
    <property type="match status" value="1"/>
</dbReference>
<dbReference type="FunFam" id="3.40.50.1010:FF:000019">
    <property type="entry name" value="U3 small nucleolar RNA-associated protein 24"/>
    <property type="match status" value="1"/>
</dbReference>
<dbReference type="Gene3D" id="3.40.50.1010">
    <property type="entry name" value="5'-nuclease"/>
    <property type="match status" value="1"/>
</dbReference>
<dbReference type="InterPro" id="IPR006984">
    <property type="entry name" value="Fcf1/Utp23"/>
</dbReference>
<dbReference type="InterPro" id="IPR037503">
    <property type="entry name" value="Fcf1_PIN"/>
</dbReference>
<dbReference type="InterPro" id="IPR029060">
    <property type="entry name" value="PIN-like_dom_sf"/>
</dbReference>
<dbReference type="InterPro" id="IPR002716">
    <property type="entry name" value="PIN_dom"/>
</dbReference>
<dbReference type="PANTHER" id="PTHR12416">
    <property type="entry name" value="RRNA-PROCESSING PROTEIN UTP23 HOMOLOG"/>
    <property type="match status" value="1"/>
</dbReference>
<dbReference type="Pfam" id="PF04900">
    <property type="entry name" value="Fcf1"/>
    <property type="match status" value="1"/>
</dbReference>
<dbReference type="SMART" id="SM00670">
    <property type="entry name" value="PINc"/>
    <property type="match status" value="1"/>
</dbReference>
<dbReference type="SUPFAM" id="SSF88723">
    <property type="entry name" value="PIN domain-like"/>
    <property type="match status" value="1"/>
</dbReference>
<evidence type="ECO:0000250" key="1"/>
<evidence type="ECO:0000269" key="2">
    <source>
    </source>
</evidence>
<evidence type="ECO:0000305" key="3"/>
<evidence type="ECO:0007829" key="4">
    <source>
        <dbReference type="PDB" id="5YZ4"/>
    </source>
</evidence>
<name>FCF1_SCHPO</name>
<keyword id="KW-0002">3D-structure</keyword>
<keyword id="KW-0539">Nucleus</keyword>
<keyword id="KW-1185">Reference proteome</keyword>
<keyword id="KW-0690">Ribosome biogenesis</keyword>
<keyword id="KW-0698">rRNA processing</keyword>
<organism>
    <name type="scientific">Schizosaccharomyces pombe (strain 972 / ATCC 24843)</name>
    <name type="common">Fission yeast</name>
    <dbReference type="NCBI Taxonomy" id="284812"/>
    <lineage>
        <taxon>Eukaryota</taxon>
        <taxon>Fungi</taxon>
        <taxon>Dikarya</taxon>
        <taxon>Ascomycota</taxon>
        <taxon>Taphrinomycotina</taxon>
        <taxon>Schizosaccharomycetes</taxon>
        <taxon>Schizosaccharomycetales</taxon>
        <taxon>Schizosaccharomycetaceae</taxon>
        <taxon>Schizosaccharomyces</taxon>
    </lineage>
</organism>
<comment type="function">
    <text evidence="1">Essential protein involved in pre-rRNA processing and 40S ribosomal subunit assembly. Required for the early cleavage steps of 35S rRNA at the A(0), A(1), and A(2) sites (By similarity).</text>
</comment>
<comment type="subcellular location">
    <subcellularLocation>
        <location evidence="2">Nucleus</location>
        <location evidence="2">Nucleolus</location>
    </subcellularLocation>
</comment>
<comment type="similarity">
    <text evidence="3">Belongs to the UTP23/FCF1 family. FCF1 subfamily.</text>
</comment>
<feature type="chain" id="PRO_0000339875" description="rRNA-processing protein fcf1">
    <location>
        <begin position="1"/>
        <end position="192"/>
    </location>
</feature>
<feature type="domain" description="PINc">
    <location>
        <begin position="65"/>
        <end position="164"/>
    </location>
</feature>
<feature type="strand" evidence="4">
    <location>
        <begin position="63"/>
        <end position="69"/>
    </location>
</feature>
<feature type="helix" evidence="4">
    <location>
        <begin position="73"/>
        <end position="79"/>
    </location>
</feature>
<feature type="helix" evidence="4">
    <location>
        <begin position="84"/>
        <end position="92"/>
    </location>
</feature>
<feature type="strand" evidence="4">
    <location>
        <begin position="96"/>
        <end position="101"/>
    </location>
</feature>
<feature type="helix" evidence="4">
    <location>
        <begin position="102"/>
        <end position="110"/>
    </location>
</feature>
<feature type="helix" evidence="4">
    <location>
        <begin position="112"/>
        <end position="115"/>
    </location>
</feature>
<feature type="helix" evidence="4">
    <location>
        <begin position="116"/>
        <end position="122"/>
    </location>
</feature>
<feature type="strand" evidence="4">
    <location>
        <begin position="128"/>
        <end position="130"/>
    </location>
</feature>
<feature type="helix" evidence="4">
    <location>
        <begin position="139"/>
        <end position="149"/>
    </location>
</feature>
<feature type="strand" evidence="4">
    <location>
        <begin position="154"/>
        <end position="156"/>
    </location>
</feature>
<feature type="helix" evidence="4">
    <location>
        <begin position="160"/>
        <end position="166"/>
    </location>
</feature>
<feature type="strand" evidence="4">
    <location>
        <begin position="174"/>
        <end position="178"/>
    </location>
</feature>
<feature type="strand" evidence="4">
    <location>
        <begin position="181"/>
        <end position="188"/>
    </location>
</feature>
<accession>O13610</accession>
<sequence length="192" mass="22352">MGKAKTTRKFAQVKRVINLKDQRLQKKDQKKEKEKTTKNGELVREIPQMASNLFFQFNESLGPPYHVIIDTNFINFCLQQKIDLFEGLMTCLYAKTIPCISDCVMAELEKLGIRYRIALRIAKDERFERLPCTHKGTYADDCIVQRVMQHKCYLVATNDKNLKQRIRKIPGIPILSVANHKIRVERLVDVVD</sequence>